<feature type="chain" id="PRO_0000276309" description="Photosystem II reaction center protein T">
    <location>
        <begin position="1"/>
        <end position="35"/>
    </location>
</feature>
<feature type="transmembrane region" description="Helical" evidence="1">
    <location>
        <begin position="3"/>
        <end position="23"/>
    </location>
</feature>
<organism>
    <name type="scientific">Populus alba</name>
    <name type="common">White poplar</name>
    <dbReference type="NCBI Taxonomy" id="43335"/>
    <lineage>
        <taxon>Eukaryota</taxon>
        <taxon>Viridiplantae</taxon>
        <taxon>Streptophyta</taxon>
        <taxon>Embryophyta</taxon>
        <taxon>Tracheophyta</taxon>
        <taxon>Spermatophyta</taxon>
        <taxon>Magnoliopsida</taxon>
        <taxon>eudicotyledons</taxon>
        <taxon>Gunneridae</taxon>
        <taxon>Pentapetalae</taxon>
        <taxon>rosids</taxon>
        <taxon>fabids</taxon>
        <taxon>Malpighiales</taxon>
        <taxon>Salicaceae</taxon>
        <taxon>Saliceae</taxon>
        <taxon>Populus</taxon>
    </lineage>
</organism>
<proteinExistence type="inferred from homology"/>
<dbReference type="EMBL" id="AP008956">
    <property type="protein sequence ID" value="BAE97232.1"/>
    <property type="molecule type" value="Genomic_DNA"/>
</dbReference>
<dbReference type="RefSeq" id="YP_665585.1">
    <property type="nucleotide sequence ID" value="NC_008235.1"/>
</dbReference>
<dbReference type="SMR" id="Q14FD0"/>
<dbReference type="GeneID" id="4178171"/>
<dbReference type="KEGG" id="palz:4178171"/>
<dbReference type="OrthoDB" id="11566at3646"/>
<dbReference type="GO" id="GO:0009535">
    <property type="term" value="C:chloroplast thylakoid membrane"/>
    <property type="evidence" value="ECO:0007669"/>
    <property type="project" value="UniProtKB-SubCell"/>
</dbReference>
<dbReference type="GO" id="GO:0009539">
    <property type="term" value="C:photosystem II reaction center"/>
    <property type="evidence" value="ECO:0007669"/>
    <property type="project" value="InterPro"/>
</dbReference>
<dbReference type="GO" id="GO:0015979">
    <property type="term" value="P:photosynthesis"/>
    <property type="evidence" value="ECO:0007669"/>
    <property type="project" value="UniProtKB-UniRule"/>
</dbReference>
<dbReference type="HAMAP" id="MF_00808">
    <property type="entry name" value="PSII_PsbT"/>
    <property type="match status" value="1"/>
</dbReference>
<dbReference type="InterPro" id="IPR001743">
    <property type="entry name" value="PSII_PsbT"/>
</dbReference>
<dbReference type="InterPro" id="IPR037268">
    <property type="entry name" value="PSII_PsbT_sf"/>
</dbReference>
<dbReference type="PANTHER" id="PTHR36411">
    <property type="match status" value="1"/>
</dbReference>
<dbReference type="PANTHER" id="PTHR36411:SF2">
    <property type="entry name" value="PHOTOSYSTEM II REACTION CENTER PROTEIN T"/>
    <property type="match status" value="1"/>
</dbReference>
<dbReference type="Pfam" id="PF01405">
    <property type="entry name" value="PsbT"/>
    <property type="match status" value="1"/>
</dbReference>
<dbReference type="SUPFAM" id="SSF161029">
    <property type="entry name" value="Photosystem II reaction center protein T, PsbT"/>
    <property type="match status" value="1"/>
</dbReference>
<evidence type="ECO:0000255" key="1">
    <source>
        <dbReference type="HAMAP-Rule" id="MF_00808"/>
    </source>
</evidence>
<reference key="1">
    <citation type="submission" date="2005-03" db="EMBL/GenBank/DDBJ databases">
        <title>Complete structure of the chloroplast genome of Populus alba.</title>
        <authorList>
            <person name="Okumura S."/>
            <person name="Yamashita A."/>
            <person name="Kanamoto H."/>
            <person name="Hattori M."/>
            <person name="Takase H."/>
            <person name="Tomizawa K."/>
        </authorList>
    </citation>
    <scope>NUCLEOTIDE SEQUENCE [LARGE SCALE GENOMIC DNA]</scope>
</reference>
<gene>
    <name evidence="1" type="primary">psbT</name>
</gene>
<accession>Q14FD0</accession>
<comment type="function">
    <text evidence="1">Found at the monomer-monomer interface of the photosystem II (PS II) dimer, plays a role in assembly and dimerization of PSII. PSII is a light-driven water plastoquinone oxidoreductase, using light energy to abstract electrons from H(2)O, generating a proton gradient subsequently used for ATP formation.</text>
</comment>
<comment type="subunit">
    <text evidence="1">PSII is composed of 1 copy each of membrane proteins PsbA, PsbB, PsbC, PsbD, PsbE, PsbF, PsbH, PsbI, PsbJ, PsbK, PsbL, PsbM, PsbT, PsbY, PsbZ, Psb30/Ycf12, at least 3 peripheral proteins of the oxygen-evolving complex and a large number of cofactors. It forms dimeric complexes.</text>
</comment>
<comment type="subcellular location">
    <subcellularLocation>
        <location evidence="1">Plastid</location>
        <location evidence="1">Chloroplast thylakoid membrane</location>
        <topology evidence="1">Single-pass membrane protein</topology>
    </subcellularLocation>
</comment>
<comment type="similarity">
    <text evidence="1">Belongs to the PsbT family.</text>
</comment>
<keyword id="KW-0150">Chloroplast</keyword>
<keyword id="KW-0472">Membrane</keyword>
<keyword id="KW-0602">Photosynthesis</keyword>
<keyword id="KW-0604">Photosystem II</keyword>
<keyword id="KW-0934">Plastid</keyword>
<keyword id="KW-0793">Thylakoid</keyword>
<keyword id="KW-0812">Transmembrane</keyword>
<keyword id="KW-1133">Transmembrane helix</keyword>
<name>PSBT_POPAL</name>
<protein>
    <recommendedName>
        <fullName evidence="1">Photosystem II reaction center protein T</fullName>
        <shortName evidence="1">PSII-T</shortName>
    </recommendedName>
</protein>
<geneLocation type="chloroplast"/>
<sequence length="35" mass="4045">MEALVYTFLLVSTLGIIFFAIFFREPPKVPTKKVK</sequence>